<dbReference type="EMBL" id="AF056116">
    <property type="protein sequence ID" value="AAC34390.1"/>
    <property type="molecule type" value="Genomic_DNA"/>
</dbReference>
<dbReference type="RefSeq" id="XP_003963122.1">
    <property type="nucleotide sequence ID" value="XM_003963073.3"/>
</dbReference>
<dbReference type="RefSeq" id="XP_029689618.1">
    <property type="nucleotide sequence ID" value="XM_029833758.1"/>
</dbReference>
<dbReference type="SMR" id="P61207"/>
<dbReference type="FunCoup" id="P61207">
    <property type="interactions" value="1526"/>
</dbReference>
<dbReference type="STRING" id="31033.ENSTRUP00000068526"/>
<dbReference type="Ensembl" id="ENSTRUT00000061200.1">
    <property type="protein sequence ID" value="ENSTRUP00000079601.1"/>
    <property type="gene ID" value="ENSTRUG00000007465.3"/>
</dbReference>
<dbReference type="Ensembl" id="ENSTRUT00000083049.1">
    <property type="protein sequence ID" value="ENSTRUP00000068526.1"/>
    <property type="gene ID" value="ENSTRUG00000027776.1"/>
</dbReference>
<dbReference type="GeneID" id="101061174"/>
<dbReference type="KEGG" id="tru:101061174"/>
<dbReference type="KEGG" id="tru:101063305"/>
<dbReference type="CTD" id="368822"/>
<dbReference type="CTD" id="445047"/>
<dbReference type="eggNOG" id="KOG0070">
    <property type="taxonomic scope" value="Eukaryota"/>
</dbReference>
<dbReference type="GeneTree" id="ENSGT00950000183080"/>
<dbReference type="HOGENOM" id="CLU_040729_9_3_1"/>
<dbReference type="InParanoid" id="P61207"/>
<dbReference type="OMA" id="NASFTVW"/>
<dbReference type="OrthoDB" id="2011769at2759"/>
<dbReference type="Proteomes" id="UP000005226">
    <property type="component" value="Chromosome 19"/>
</dbReference>
<dbReference type="Proteomes" id="UP000005226">
    <property type="component" value="Chromosome 3"/>
</dbReference>
<dbReference type="GO" id="GO:0005794">
    <property type="term" value="C:Golgi apparatus"/>
    <property type="evidence" value="ECO:0007669"/>
    <property type="project" value="UniProtKB-SubCell"/>
</dbReference>
<dbReference type="GO" id="GO:0005525">
    <property type="term" value="F:GTP binding"/>
    <property type="evidence" value="ECO:0007669"/>
    <property type="project" value="UniProtKB-KW"/>
</dbReference>
<dbReference type="GO" id="GO:0003924">
    <property type="term" value="F:GTPase activity"/>
    <property type="evidence" value="ECO:0007669"/>
    <property type="project" value="InterPro"/>
</dbReference>
<dbReference type="GO" id="GO:0015031">
    <property type="term" value="P:protein transport"/>
    <property type="evidence" value="ECO:0007669"/>
    <property type="project" value="UniProtKB-KW"/>
</dbReference>
<dbReference type="GO" id="GO:0016192">
    <property type="term" value="P:vesicle-mediated transport"/>
    <property type="evidence" value="ECO:0007669"/>
    <property type="project" value="UniProtKB-KW"/>
</dbReference>
<dbReference type="CDD" id="cd04150">
    <property type="entry name" value="Arf1_5_like"/>
    <property type="match status" value="1"/>
</dbReference>
<dbReference type="FunFam" id="3.40.50.300:FF:003500">
    <property type="entry name" value="ADP-ribosylation factor 1"/>
    <property type="match status" value="1"/>
</dbReference>
<dbReference type="Gene3D" id="3.40.50.300">
    <property type="entry name" value="P-loop containing nucleotide triphosphate hydrolases"/>
    <property type="match status" value="1"/>
</dbReference>
<dbReference type="InterPro" id="IPR045872">
    <property type="entry name" value="Arf1-5-like"/>
</dbReference>
<dbReference type="InterPro" id="IPR027417">
    <property type="entry name" value="P-loop_NTPase"/>
</dbReference>
<dbReference type="InterPro" id="IPR005225">
    <property type="entry name" value="Small_GTP-bd"/>
</dbReference>
<dbReference type="InterPro" id="IPR024156">
    <property type="entry name" value="Small_GTPase_ARF"/>
</dbReference>
<dbReference type="InterPro" id="IPR006689">
    <property type="entry name" value="Small_GTPase_ARF/SAR"/>
</dbReference>
<dbReference type="NCBIfam" id="TIGR00231">
    <property type="entry name" value="small_GTP"/>
    <property type="match status" value="1"/>
</dbReference>
<dbReference type="PANTHER" id="PTHR11711">
    <property type="entry name" value="ADP RIBOSYLATION FACTOR-RELATED"/>
    <property type="match status" value="1"/>
</dbReference>
<dbReference type="Pfam" id="PF00025">
    <property type="entry name" value="Arf"/>
    <property type="match status" value="1"/>
</dbReference>
<dbReference type="PRINTS" id="PR00328">
    <property type="entry name" value="SAR1GTPBP"/>
</dbReference>
<dbReference type="SMART" id="SM00177">
    <property type="entry name" value="ARF"/>
    <property type="match status" value="1"/>
</dbReference>
<dbReference type="SMART" id="SM00175">
    <property type="entry name" value="RAB"/>
    <property type="match status" value="1"/>
</dbReference>
<dbReference type="SMART" id="SM00178">
    <property type="entry name" value="SAR"/>
    <property type="match status" value="1"/>
</dbReference>
<dbReference type="SUPFAM" id="SSF52540">
    <property type="entry name" value="P-loop containing nucleoside triphosphate hydrolases"/>
    <property type="match status" value="1"/>
</dbReference>
<dbReference type="PROSITE" id="PS51417">
    <property type="entry name" value="ARF"/>
    <property type="match status" value="1"/>
</dbReference>
<organism>
    <name type="scientific">Takifugu rubripes</name>
    <name type="common">Japanese pufferfish</name>
    <name type="synonym">Fugu rubripes</name>
    <dbReference type="NCBI Taxonomy" id="31033"/>
    <lineage>
        <taxon>Eukaryota</taxon>
        <taxon>Metazoa</taxon>
        <taxon>Chordata</taxon>
        <taxon>Craniata</taxon>
        <taxon>Vertebrata</taxon>
        <taxon>Euteleostomi</taxon>
        <taxon>Actinopterygii</taxon>
        <taxon>Neopterygii</taxon>
        <taxon>Teleostei</taxon>
        <taxon>Neoteleostei</taxon>
        <taxon>Acanthomorphata</taxon>
        <taxon>Eupercaria</taxon>
        <taxon>Tetraodontiformes</taxon>
        <taxon>Tetradontoidea</taxon>
        <taxon>Tetraodontidae</taxon>
        <taxon>Takifugu</taxon>
    </lineage>
</organism>
<protein>
    <recommendedName>
        <fullName>ADP-ribosylation factor 3</fullName>
    </recommendedName>
</protein>
<keyword id="KW-0931">ER-Golgi transport</keyword>
<keyword id="KW-0333">Golgi apparatus</keyword>
<keyword id="KW-0342">GTP-binding</keyword>
<keyword id="KW-0449">Lipoprotein</keyword>
<keyword id="KW-0519">Myristate</keyword>
<keyword id="KW-0547">Nucleotide-binding</keyword>
<keyword id="KW-0653">Protein transport</keyword>
<keyword id="KW-1185">Reference proteome</keyword>
<keyword id="KW-0813">Transport</keyword>
<accession>P61207</accession>
<accession>P16587</accession>
<sequence length="181" mass="20601">MGNIFGNLLKSLIGKKEMRILMVGLDAAGKTTILYKLKLGEIVTTIPTIGFNVETVEYKNISFTVWDVGGQDKIRPLWRHYFQNTQGLIFVVDSNDRERVNEAREELMRMLAEDELRDAVLLVFANKQDLPNAMNAAEITDKLGLHSLRHRNWYIQATCATSGDGLYEGLDWLANQLKNKK</sequence>
<gene>
    <name type="primary">arf3</name>
</gene>
<comment type="function">
    <text>GTP-binding protein involved in protein trafficking; may modulate vesicle budding and uncoating within the Golgi apparatus.</text>
</comment>
<comment type="subcellular location">
    <subcellularLocation>
        <location>Golgi apparatus</location>
    </subcellularLocation>
</comment>
<comment type="similarity">
    <text evidence="3">Belongs to the small GTPase superfamily. Arf family.</text>
</comment>
<evidence type="ECO:0000250" key="1"/>
<evidence type="ECO:0000255" key="2"/>
<evidence type="ECO:0000305" key="3"/>
<proteinExistence type="inferred from homology"/>
<name>ARF3_TAKRU</name>
<feature type="initiator methionine" description="Removed" evidence="2">
    <location>
        <position position="1"/>
    </location>
</feature>
<feature type="chain" id="PRO_0000207390" description="ADP-ribosylation factor 3">
    <location>
        <begin position="2"/>
        <end position="181"/>
    </location>
</feature>
<feature type="binding site" evidence="1">
    <location>
        <begin position="24"/>
        <end position="31"/>
    </location>
    <ligand>
        <name>GTP</name>
        <dbReference type="ChEBI" id="CHEBI:37565"/>
    </ligand>
</feature>
<feature type="binding site" evidence="1">
    <location>
        <begin position="67"/>
        <end position="71"/>
    </location>
    <ligand>
        <name>GTP</name>
        <dbReference type="ChEBI" id="CHEBI:37565"/>
    </ligand>
</feature>
<feature type="binding site" evidence="1">
    <location>
        <begin position="126"/>
        <end position="129"/>
    </location>
    <ligand>
        <name>GTP</name>
        <dbReference type="ChEBI" id="CHEBI:37565"/>
    </ligand>
</feature>
<feature type="lipid moiety-binding region" description="N-myristoyl glycine" evidence="2">
    <location>
        <position position="2"/>
    </location>
</feature>
<reference key="1">
    <citation type="journal article" date="1999" name="Genome Res.">
        <title>Analysis of 148 kb of genomic DNA around the wnt1 locus of Fugu rubripes.</title>
        <authorList>
            <person name="Gellner K."/>
            <person name="Brenner S."/>
        </authorList>
    </citation>
    <scope>NUCLEOTIDE SEQUENCE [GENOMIC DNA]</scope>
</reference>